<keyword id="KW-0489">Methyltransferase</keyword>
<keyword id="KW-1185">Reference proteome</keyword>
<keyword id="KW-0808">Transferase</keyword>
<accession>P74328</accession>
<proteinExistence type="inferred from homology"/>
<gene>
    <name type="ordered locus">slr0955</name>
</gene>
<sequence>MTEMPKKKFSPRSARGDKPRYGEQKPKLKRSGDKPRFNDDQPQGFKEKSDRFQDKPRPRTNDDKPRRAGDKPSNFKSRFKDKDRDKPRYGDDRPRRSGQKPPFGKTFPAAPPPMDSEQAQEALDLLYGHHAVLAALDGDRQLNRIWITSHLRHDIRYRTKIQTAKANGTVVDEVDNFRLNQITHNANHQGIAAQVAPYHYWELGDLIDKAKSQSTAPVLIIIDSITDPHNLGAIIRTAEAFGAQGMVLPQRRVAGITSTVMKVAAGALEHFPVARVVNLSRALETLKESGFWIYGTVAGKQTALHQADLREPMGLVIGSEGEGLSLLTQKHCDHLITIPLAGKTPSLNASVAAAISLYEIFRQRGFDRPTLSHTASDLREVSED</sequence>
<feature type="chain" id="PRO_0000159839" description="Uncharacterized tRNA/rRNA methyltransferase slr0955">
    <location>
        <begin position="1"/>
        <end position="384"/>
    </location>
</feature>
<feature type="region of interest" description="Disordered" evidence="2">
    <location>
        <begin position="1"/>
        <end position="116"/>
    </location>
</feature>
<feature type="compositionally biased region" description="Basic and acidic residues" evidence="2">
    <location>
        <begin position="14"/>
        <end position="70"/>
    </location>
</feature>
<feature type="compositionally biased region" description="Basic and acidic residues" evidence="2">
    <location>
        <begin position="78"/>
        <end position="95"/>
    </location>
</feature>
<feature type="binding site" evidence="1">
    <location>
        <position position="318"/>
    </location>
    <ligand>
        <name>S-adenosyl-L-methionine</name>
        <dbReference type="ChEBI" id="CHEBI:59789"/>
    </ligand>
</feature>
<feature type="binding site" evidence="1">
    <location>
        <position position="338"/>
    </location>
    <ligand>
        <name>S-adenosyl-L-methionine</name>
        <dbReference type="ChEBI" id="CHEBI:59789"/>
    </ligand>
</feature>
<feature type="binding site" evidence="1">
    <location>
        <position position="347"/>
    </location>
    <ligand>
        <name>S-adenosyl-L-methionine</name>
        <dbReference type="ChEBI" id="CHEBI:59789"/>
    </ligand>
</feature>
<name>Y955_SYNY3</name>
<organism>
    <name type="scientific">Synechocystis sp. (strain ATCC 27184 / PCC 6803 / Kazusa)</name>
    <dbReference type="NCBI Taxonomy" id="1111708"/>
    <lineage>
        <taxon>Bacteria</taxon>
        <taxon>Bacillati</taxon>
        <taxon>Cyanobacteriota</taxon>
        <taxon>Cyanophyceae</taxon>
        <taxon>Synechococcales</taxon>
        <taxon>Merismopediaceae</taxon>
        <taxon>Synechocystis</taxon>
    </lineage>
</organism>
<protein>
    <recommendedName>
        <fullName>Uncharacterized tRNA/rRNA methyltransferase slr0955</fullName>
        <ecNumber>2.1.1.-</ecNumber>
    </recommendedName>
</protein>
<evidence type="ECO:0000250" key="1"/>
<evidence type="ECO:0000256" key="2">
    <source>
        <dbReference type="SAM" id="MobiDB-lite"/>
    </source>
</evidence>
<evidence type="ECO:0000305" key="3"/>
<comment type="similarity">
    <text evidence="3">Belongs to the class IV-like SAM-binding methyltransferase superfamily. RNA methyltransferase TrmH family.</text>
</comment>
<dbReference type="EC" id="2.1.1.-"/>
<dbReference type="EMBL" id="BA000022">
    <property type="protein sequence ID" value="BAA18422.1"/>
    <property type="molecule type" value="Genomic_DNA"/>
</dbReference>
<dbReference type="PIR" id="S76163">
    <property type="entry name" value="S76163"/>
</dbReference>
<dbReference type="SMR" id="P74328"/>
<dbReference type="FunCoup" id="P74328">
    <property type="interactions" value="404"/>
</dbReference>
<dbReference type="IntAct" id="P74328">
    <property type="interactions" value="7"/>
</dbReference>
<dbReference type="STRING" id="1148.gene:10499298"/>
<dbReference type="PaxDb" id="1148-1653509"/>
<dbReference type="EnsemblBacteria" id="BAA18422">
    <property type="protein sequence ID" value="BAA18422"/>
    <property type="gene ID" value="BAA18422"/>
</dbReference>
<dbReference type="KEGG" id="syn:slr0955"/>
<dbReference type="eggNOG" id="COG0566">
    <property type="taxonomic scope" value="Bacteria"/>
</dbReference>
<dbReference type="InParanoid" id="P74328"/>
<dbReference type="PhylomeDB" id="P74328"/>
<dbReference type="Proteomes" id="UP000001425">
    <property type="component" value="Chromosome"/>
</dbReference>
<dbReference type="GO" id="GO:0005829">
    <property type="term" value="C:cytosol"/>
    <property type="evidence" value="ECO:0000318"/>
    <property type="project" value="GO_Central"/>
</dbReference>
<dbReference type="GO" id="GO:0003723">
    <property type="term" value="F:RNA binding"/>
    <property type="evidence" value="ECO:0007669"/>
    <property type="project" value="InterPro"/>
</dbReference>
<dbReference type="GO" id="GO:0008173">
    <property type="term" value="F:RNA methyltransferase activity"/>
    <property type="evidence" value="ECO:0000318"/>
    <property type="project" value="GO_Central"/>
</dbReference>
<dbReference type="GO" id="GO:0032259">
    <property type="term" value="P:methylation"/>
    <property type="evidence" value="ECO:0007669"/>
    <property type="project" value="UniProtKB-KW"/>
</dbReference>
<dbReference type="GO" id="GO:0006396">
    <property type="term" value="P:RNA processing"/>
    <property type="evidence" value="ECO:0007669"/>
    <property type="project" value="InterPro"/>
</dbReference>
<dbReference type="CDD" id="cd18103">
    <property type="entry name" value="SpoU-like_RlmB"/>
    <property type="match status" value="1"/>
</dbReference>
<dbReference type="FunFam" id="3.40.1280.10:FF:000008">
    <property type="entry name" value="Group 3 RNA methyltransferase TrmH"/>
    <property type="match status" value="1"/>
</dbReference>
<dbReference type="FunFam" id="3.30.1330.30:FF:000063">
    <property type="entry name" value="RNA methyltransferase, TrmH family, group 3"/>
    <property type="match status" value="1"/>
</dbReference>
<dbReference type="Gene3D" id="3.30.1330.30">
    <property type="match status" value="1"/>
</dbReference>
<dbReference type="Gene3D" id="3.40.1280.10">
    <property type="match status" value="1"/>
</dbReference>
<dbReference type="InterPro" id="IPR029028">
    <property type="entry name" value="Alpha/beta_knot_MTases"/>
</dbReference>
<dbReference type="InterPro" id="IPR029064">
    <property type="entry name" value="Ribosomal_eL30-like_sf"/>
</dbReference>
<dbReference type="InterPro" id="IPR004441">
    <property type="entry name" value="rRNA_MeTrfase_TrmH"/>
</dbReference>
<dbReference type="InterPro" id="IPR001537">
    <property type="entry name" value="SpoU_MeTrfase"/>
</dbReference>
<dbReference type="InterPro" id="IPR013123">
    <property type="entry name" value="SpoU_subst-bd"/>
</dbReference>
<dbReference type="InterPro" id="IPR029026">
    <property type="entry name" value="tRNA_m1G_MTases_N"/>
</dbReference>
<dbReference type="NCBIfam" id="TIGR00186">
    <property type="entry name" value="rRNA_methyl_3"/>
    <property type="match status" value="1"/>
</dbReference>
<dbReference type="PANTHER" id="PTHR46429">
    <property type="entry name" value="23S RRNA (GUANOSINE-2'-O-)-METHYLTRANSFERASE RLMB"/>
    <property type="match status" value="1"/>
</dbReference>
<dbReference type="PANTHER" id="PTHR46429:SF1">
    <property type="entry name" value="23S RRNA (GUANOSINE-2'-O-)-METHYLTRANSFERASE RLMB"/>
    <property type="match status" value="1"/>
</dbReference>
<dbReference type="Pfam" id="PF00588">
    <property type="entry name" value="SpoU_methylase"/>
    <property type="match status" value="1"/>
</dbReference>
<dbReference type="Pfam" id="PF08032">
    <property type="entry name" value="SpoU_sub_bind"/>
    <property type="match status" value="1"/>
</dbReference>
<dbReference type="SMART" id="SM00967">
    <property type="entry name" value="SpoU_sub_bind"/>
    <property type="match status" value="1"/>
</dbReference>
<dbReference type="SUPFAM" id="SSF75217">
    <property type="entry name" value="alpha/beta knot"/>
    <property type="match status" value="1"/>
</dbReference>
<dbReference type="SUPFAM" id="SSF55315">
    <property type="entry name" value="L30e-like"/>
    <property type="match status" value="1"/>
</dbReference>
<reference key="1">
    <citation type="journal article" date="1996" name="DNA Res.">
        <title>Sequence analysis of the genome of the unicellular cyanobacterium Synechocystis sp. strain PCC6803. II. Sequence determination of the entire genome and assignment of potential protein-coding regions.</title>
        <authorList>
            <person name="Kaneko T."/>
            <person name="Sato S."/>
            <person name="Kotani H."/>
            <person name="Tanaka A."/>
            <person name="Asamizu E."/>
            <person name="Nakamura Y."/>
            <person name="Miyajima N."/>
            <person name="Hirosawa M."/>
            <person name="Sugiura M."/>
            <person name="Sasamoto S."/>
            <person name="Kimura T."/>
            <person name="Hosouchi T."/>
            <person name="Matsuno A."/>
            <person name="Muraki A."/>
            <person name="Nakazaki N."/>
            <person name="Naruo K."/>
            <person name="Okumura S."/>
            <person name="Shimpo S."/>
            <person name="Takeuchi C."/>
            <person name="Wada T."/>
            <person name="Watanabe A."/>
            <person name="Yamada M."/>
            <person name="Yasuda M."/>
            <person name="Tabata S."/>
        </authorList>
    </citation>
    <scope>NUCLEOTIDE SEQUENCE [LARGE SCALE GENOMIC DNA]</scope>
    <source>
        <strain>ATCC 27184 / PCC 6803 / Kazusa</strain>
    </source>
</reference>